<protein>
    <recommendedName>
        <fullName>GPI mannosyltransferase 3</fullName>
        <ecNumber>2.4.1.-</ecNumber>
    </recommendedName>
    <alternativeName>
        <fullName>GPI mannosyltransferase III</fullName>
        <shortName>GPI-MT-III</shortName>
    </alternativeName>
    <alternativeName>
        <fullName>Glycosylphosphatidylinositol-anchor biosynthesis protein 10</fullName>
    </alternativeName>
</protein>
<organism>
    <name type="scientific">Debaryomyces hansenii (strain ATCC 36239 / CBS 767 / BCRC 21394 / JCM 1990 / NBRC 0083 / IGC 2968)</name>
    <name type="common">Yeast</name>
    <name type="synonym">Torulaspora hansenii</name>
    <dbReference type="NCBI Taxonomy" id="284592"/>
    <lineage>
        <taxon>Eukaryota</taxon>
        <taxon>Fungi</taxon>
        <taxon>Dikarya</taxon>
        <taxon>Ascomycota</taxon>
        <taxon>Saccharomycotina</taxon>
        <taxon>Pichiomycetes</taxon>
        <taxon>Debaryomycetaceae</taxon>
        <taxon>Debaryomyces</taxon>
    </lineage>
</organism>
<reference key="1">
    <citation type="journal article" date="2004" name="Nature">
        <title>Genome evolution in yeasts.</title>
        <authorList>
            <person name="Dujon B."/>
            <person name="Sherman D."/>
            <person name="Fischer G."/>
            <person name="Durrens P."/>
            <person name="Casaregola S."/>
            <person name="Lafontaine I."/>
            <person name="de Montigny J."/>
            <person name="Marck C."/>
            <person name="Neuveglise C."/>
            <person name="Talla E."/>
            <person name="Goffard N."/>
            <person name="Frangeul L."/>
            <person name="Aigle M."/>
            <person name="Anthouard V."/>
            <person name="Babour A."/>
            <person name="Barbe V."/>
            <person name="Barnay S."/>
            <person name="Blanchin S."/>
            <person name="Beckerich J.-M."/>
            <person name="Beyne E."/>
            <person name="Bleykasten C."/>
            <person name="Boisrame A."/>
            <person name="Boyer J."/>
            <person name="Cattolico L."/>
            <person name="Confanioleri F."/>
            <person name="de Daruvar A."/>
            <person name="Despons L."/>
            <person name="Fabre E."/>
            <person name="Fairhead C."/>
            <person name="Ferry-Dumazet H."/>
            <person name="Groppi A."/>
            <person name="Hantraye F."/>
            <person name="Hennequin C."/>
            <person name="Jauniaux N."/>
            <person name="Joyet P."/>
            <person name="Kachouri R."/>
            <person name="Kerrest A."/>
            <person name="Koszul R."/>
            <person name="Lemaire M."/>
            <person name="Lesur I."/>
            <person name="Ma L."/>
            <person name="Muller H."/>
            <person name="Nicaud J.-M."/>
            <person name="Nikolski M."/>
            <person name="Oztas S."/>
            <person name="Ozier-Kalogeropoulos O."/>
            <person name="Pellenz S."/>
            <person name="Potier S."/>
            <person name="Richard G.-F."/>
            <person name="Straub M.-L."/>
            <person name="Suleau A."/>
            <person name="Swennen D."/>
            <person name="Tekaia F."/>
            <person name="Wesolowski-Louvel M."/>
            <person name="Westhof E."/>
            <person name="Wirth B."/>
            <person name="Zeniou-Meyer M."/>
            <person name="Zivanovic Y."/>
            <person name="Bolotin-Fukuhara M."/>
            <person name="Thierry A."/>
            <person name="Bouchier C."/>
            <person name="Caudron B."/>
            <person name="Scarpelli C."/>
            <person name="Gaillardin C."/>
            <person name="Weissenbach J."/>
            <person name="Wincker P."/>
            <person name="Souciet J.-L."/>
        </authorList>
    </citation>
    <scope>NUCLEOTIDE SEQUENCE [LARGE SCALE GENOMIC DNA]</scope>
    <source>
        <strain>ATCC 36239 / CBS 767 / BCRC 21394 / JCM 1990 / NBRC 0083 / IGC 2968</strain>
    </source>
</reference>
<gene>
    <name type="primary">GPI10</name>
    <name type="ordered locus">DEHA2G21010g</name>
</gene>
<proteinExistence type="inferred from homology"/>
<keyword id="KW-0256">Endoplasmic reticulum</keyword>
<keyword id="KW-0325">Glycoprotein</keyword>
<keyword id="KW-0328">Glycosyltransferase</keyword>
<keyword id="KW-0337">GPI-anchor biosynthesis</keyword>
<keyword id="KW-0472">Membrane</keyword>
<keyword id="KW-1185">Reference proteome</keyword>
<keyword id="KW-0808">Transferase</keyword>
<keyword id="KW-0812">Transmembrane</keyword>
<keyword id="KW-1133">Transmembrane helix</keyword>
<comment type="function">
    <text evidence="1">Mannosyltransferase involved in glycosylphosphatidylinositol-anchor biosynthesis. Transfers the third mannose to Man2-GlcN-acyl-PI during GPI precursor assembly (By similarity).</text>
</comment>
<comment type="pathway">
    <text>Glycolipid biosynthesis; glycosylphosphatidylinositol-anchor biosynthesis.</text>
</comment>
<comment type="subcellular location">
    <subcellularLocation>
        <location evidence="1">Endoplasmic reticulum membrane</location>
        <topology evidence="1">Multi-pass membrane protein</topology>
    </subcellularLocation>
</comment>
<comment type="similarity">
    <text evidence="3">Belongs to the glycosyltransferase 22 family. PIGB subfamily.</text>
</comment>
<feature type="chain" id="PRO_0000246262" description="GPI mannosyltransferase 3">
    <location>
        <begin position="1"/>
        <end position="549"/>
    </location>
</feature>
<feature type="topological domain" description="Cytoplasmic" evidence="2">
    <location>
        <begin position="1"/>
        <end position="39"/>
    </location>
</feature>
<feature type="transmembrane region" description="Helical" evidence="2">
    <location>
        <begin position="40"/>
        <end position="60"/>
    </location>
</feature>
<feature type="topological domain" description="Lumenal" evidence="2">
    <location>
        <begin position="61"/>
        <end position="119"/>
    </location>
</feature>
<feature type="transmembrane region" description="Helical" evidence="2">
    <location>
        <begin position="120"/>
        <end position="140"/>
    </location>
</feature>
<feature type="topological domain" description="Cytoplasmic" evidence="2">
    <location>
        <begin position="141"/>
        <end position="154"/>
    </location>
</feature>
<feature type="transmembrane region" description="Helical" evidence="2">
    <location>
        <begin position="155"/>
        <end position="175"/>
    </location>
</feature>
<feature type="topological domain" description="Lumenal" evidence="2">
    <location>
        <begin position="176"/>
        <end position="205"/>
    </location>
</feature>
<feature type="transmembrane region" description="Helical" evidence="2">
    <location>
        <begin position="206"/>
        <end position="226"/>
    </location>
</feature>
<feature type="topological domain" description="Cytoplasmic" evidence="2">
    <location>
        <begin position="227"/>
        <end position="246"/>
    </location>
</feature>
<feature type="transmembrane region" description="Helical" evidence="2">
    <location>
        <begin position="247"/>
        <end position="267"/>
    </location>
</feature>
<feature type="topological domain" description="Lumenal" evidence="2">
    <location>
        <begin position="268"/>
        <end position="289"/>
    </location>
</feature>
<feature type="transmembrane region" description="Helical" evidence="2">
    <location>
        <begin position="290"/>
        <end position="310"/>
    </location>
</feature>
<feature type="topological domain" description="Cytoplasmic" evidence="2">
    <location>
        <begin position="311"/>
        <end position="328"/>
    </location>
</feature>
<feature type="transmembrane region" description="Helical" evidence="2">
    <location>
        <begin position="329"/>
        <end position="349"/>
    </location>
</feature>
<feature type="topological domain" description="Lumenal" evidence="2">
    <location>
        <position position="350"/>
    </location>
</feature>
<feature type="transmembrane region" description="Helical" evidence="2">
    <location>
        <begin position="351"/>
        <end position="367"/>
    </location>
</feature>
<feature type="topological domain" description="Cytoplasmic" evidence="2">
    <location>
        <begin position="368"/>
        <end position="379"/>
    </location>
</feature>
<feature type="transmembrane region" description="Helical" evidence="2">
    <location>
        <begin position="380"/>
        <end position="400"/>
    </location>
</feature>
<feature type="topological domain" description="Lumenal" evidence="2">
    <location>
        <begin position="401"/>
        <end position="549"/>
    </location>
</feature>
<feature type="glycosylation site" description="N-linked (GlcNAc...) asparagine" evidence="2">
    <location>
        <position position="287"/>
    </location>
</feature>
<feature type="glycosylation site" description="N-linked (GlcNAc...) asparagine" evidence="2">
    <location>
        <position position="442"/>
    </location>
</feature>
<sequence>MAYNNSVRKRKKDIQDANGFHRDQTIDKKSRATNKLEESLPTFKVFIVLFFIRLLNSLTIKTFFQADEYYQCLEPAYNFVFGSGYITWEWEEGIRSSIHPLIYALGYKMVSYVHFDDKPIILIPKVIGALIASIGEVYLYKFSKKFTKNEKLARLTLILSLLSPFNWYIITRSFSNSFEMVLTTIAFTYWPWDNVISYKDISMSCIIAFISCIVRPTNGIIWLYLGINFMIKNYKLEKQSGKLMKLILILSIELILILLVNTGLDYIFYGKTTFPLYNFVEFNVIRNLSIFYGVAPWHFYLFQGVPIILMTYLPWLLHSAIVLKKYKSLLGQVAILMIGGFSLIDHKEIRFIYPLQPIFMLMVAYSIHETKHKFQRLYKFLVPVIIILNLIIAIFFTQVHERGVIDIVQYLRNNPDIESFGFLTPCHSTPWQSHINNPNLVNKSWFLTCEPPLHLTTTSLKEIKSYRDESDQFYDNPAQFLSEHFQSFADSRNTGASNWPSRLIIFEPLENFMDDFLRGSNYFECERFFNSYFHWDDRRKGDIIVYCQI</sequence>
<evidence type="ECO:0000250" key="1"/>
<evidence type="ECO:0000255" key="2"/>
<evidence type="ECO:0000305" key="3"/>
<dbReference type="EC" id="2.4.1.-"/>
<dbReference type="EMBL" id="CR382139">
    <property type="protein sequence ID" value="CAR66012.1"/>
    <property type="molecule type" value="Genomic_DNA"/>
</dbReference>
<dbReference type="RefSeq" id="XP_002770680.1">
    <property type="nucleotide sequence ID" value="XM_002770634.1"/>
</dbReference>
<dbReference type="FunCoup" id="Q6BH65">
    <property type="interactions" value="881"/>
</dbReference>
<dbReference type="STRING" id="284592.Q6BH65"/>
<dbReference type="CAZy" id="GT22">
    <property type="family name" value="Glycosyltransferase Family 22"/>
</dbReference>
<dbReference type="GlyCosmos" id="Q6BH65">
    <property type="glycosylation" value="2 sites, No reported glycans"/>
</dbReference>
<dbReference type="GeneID" id="8999268"/>
<dbReference type="KEGG" id="dha:DEHA2G21010g"/>
<dbReference type="VEuPathDB" id="FungiDB:DEHA2G21010g"/>
<dbReference type="eggNOG" id="KOG1771">
    <property type="taxonomic scope" value="Eukaryota"/>
</dbReference>
<dbReference type="HOGENOM" id="CLU_012353_0_1_1"/>
<dbReference type="InParanoid" id="Q6BH65"/>
<dbReference type="OMA" id="HHMVFNN"/>
<dbReference type="OrthoDB" id="416834at2759"/>
<dbReference type="UniPathway" id="UPA00196"/>
<dbReference type="Proteomes" id="UP000000599">
    <property type="component" value="Chromosome G"/>
</dbReference>
<dbReference type="GO" id="GO:0005789">
    <property type="term" value="C:endoplasmic reticulum membrane"/>
    <property type="evidence" value="ECO:0007669"/>
    <property type="project" value="UniProtKB-SubCell"/>
</dbReference>
<dbReference type="GO" id="GO:0000026">
    <property type="term" value="F:alpha-1,2-mannosyltransferase activity"/>
    <property type="evidence" value="ECO:0007669"/>
    <property type="project" value="TreeGrafter"/>
</dbReference>
<dbReference type="GO" id="GO:0006506">
    <property type="term" value="P:GPI anchor biosynthetic process"/>
    <property type="evidence" value="ECO:0007669"/>
    <property type="project" value="UniProtKB-UniPathway"/>
</dbReference>
<dbReference type="InterPro" id="IPR005599">
    <property type="entry name" value="GPI_mannosylTrfase"/>
</dbReference>
<dbReference type="PANTHER" id="PTHR22760">
    <property type="entry name" value="GLYCOSYLTRANSFERASE"/>
    <property type="match status" value="1"/>
</dbReference>
<dbReference type="PANTHER" id="PTHR22760:SF4">
    <property type="entry name" value="GPI MANNOSYLTRANSFERASE 3"/>
    <property type="match status" value="1"/>
</dbReference>
<dbReference type="Pfam" id="PF03901">
    <property type="entry name" value="Glyco_transf_22"/>
    <property type="match status" value="1"/>
</dbReference>
<name>GPI10_DEBHA</name>
<accession>Q6BH65</accession>
<accession>B5RUW7</accession>